<accession>F4JYG0</accession>
<accession>Q0WP46</accession>
<accession>Q9FFS2</accession>
<protein>
    <recommendedName>
        <fullName evidence="5">E4 SUMO-protein ligase PIAL2</fullName>
        <ecNumber evidence="3">2.3.2.-</ecNumber>
    </recommendedName>
    <alternativeName>
        <fullName evidence="5">Protein INHIBITOR OF ACTIVATED STAT-LIKE 2</fullName>
    </alternativeName>
</protein>
<gene>
    <name evidence="5" type="primary">PIAL2</name>
    <name evidence="7" type="ordered locus">At5g41580</name>
    <name evidence="8" type="ORF">MBK23.10</name>
</gene>
<evidence type="ECO:0000255" key="1">
    <source>
        <dbReference type="PROSITE-ProRule" id="PRU00452"/>
    </source>
</evidence>
<evidence type="ECO:0000256" key="2">
    <source>
        <dbReference type="SAM" id="MobiDB-lite"/>
    </source>
</evidence>
<evidence type="ECO:0000269" key="3">
    <source>
    </source>
</evidence>
<evidence type="ECO:0000269" key="4">
    <source>
    </source>
</evidence>
<evidence type="ECO:0000303" key="5">
    <source>
    </source>
</evidence>
<evidence type="ECO:0000305" key="6"/>
<evidence type="ECO:0000312" key="7">
    <source>
        <dbReference type="Araport" id="AT5G41580"/>
    </source>
</evidence>
<evidence type="ECO:0000312" key="8">
    <source>
        <dbReference type="EMBL" id="BAB11464.1"/>
    </source>
</evidence>
<dbReference type="EC" id="2.3.2.-" evidence="3"/>
<dbReference type="EMBL" id="AB005233">
    <property type="protein sequence ID" value="BAB11464.1"/>
    <property type="status" value="ALT_SEQ"/>
    <property type="molecule type" value="Genomic_DNA"/>
</dbReference>
<dbReference type="EMBL" id="CP002688">
    <property type="protein sequence ID" value="AED94694.1"/>
    <property type="molecule type" value="Genomic_DNA"/>
</dbReference>
<dbReference type="EMBL" id="AK229237">
    <property type="protein sequence ID" value="BAF01103.1"/>
    <property type="molecule type" value="mRNA"/>
</dbReference>
<dbReference type="RefSeq" id="NP_198973.3">
    <property type="nucleotide sequence ID" value="NM_123522.4"/>
</dbReference>
<dbReference type="SMR" id="F4JYG0"/>
<dbReference type="FunCoup" id="F4JYG0">
    <property type="interactions" value="521"/>
</dbReference>
<dbReference type="IntAct" id="F4JYG0">
    <property type="interactions" value="7"/>
</dbReference>
<dbReference type="STRING" id="3702.F4JYG0"/>
<dbReference type="GlyGen" id="F4JYG0">
    <property type="glycosylation" value="6 sites, 1 O-linked glycan (4 sites)"/>
</dbReference>
<dbReference type="iPTMnet" id="F4JYG0"/>
<dbReference type="PaxDb" id="3702-AT5G41580.1"/>
<dbReference type="ProteomicsDB" id="236790"/>
<dbReference type="EnsemblPlants" id="AT5G41580.1">
    <property type="protein sequence ID" value="AT5G41580.1"/>
    <property type="gene ID" value="AT5G41580"/>
</dbReference>
<dbReference type="GeneID" id="834160"/>
<dbReference type="Gramene" id="AT5G41580.1">
    <property type="protein sequence ID" value="AT5G41580.1"/>
    <property type="gene ID" value="AT5G41580"/>
</dbReference>
<dbReference type="KEGG" id="ath:AT5G41580"/>
<dbReference type="Araport" id="AT5G41580"/>
<dbReference type="TAIR" id="AT5G41580">
    <property type="gene designation" value="PIAL2"/>
</dbReference>
<dbReference type="eggNOG" id="KOG2169">
    <property type="taxonomic scope" value="Eukaryota"/>
</dbReference>
<dbReference type="HOGENOM" id="CLU_016114_0_0_1"/>
<dbReference type="InParanoid" id="F4JYG0"/>
<dbReference type="OMA" id="PDTTNWR"/>
<dbReference type="OrthoDB" id="10263264at2759"/>
<dbReference type="UniPathway" id="UPA00886"/>
<dbReference type="PRO" id="PR:F4JYG0"/>
<dbReference type="Proteomes" id="UP000006548">
    <property type="component" value="Chromosome 5"/>
</dbReference>
<dbReference type="ExpressionAtlas" id="F4JYG0">
    <property type="expression patterns" value="baseline and differential"/>
</dbReference>
<dbReference type="GO" id="GO:0005634">
    <property type="term" value="C:nucleus"/>
    <property type="evidence" value="ECO:0007669"/>
    <property type="project" value="UniProtKB-SubCell"/>
</dbReference>
<dbReference type="GO" id="GO:0042802">
    <property type="term" value="F:identical protein binding"/>
    <property type="evidence" value="ECO:0000314"/>
    <property type="project" value="UniProtKB"/>
</dbReference>
<dbReference type="GO" id="GO:0016874">
    <property type="term" value="F:ligase activity"/>
    <property type="evidence" value="ECO:0007669"/>
    <property type="project" value="UniProtKB-KW"/>
</dbReference>
<dbReference type="GO" id="GO:0042803">
    <property type="term" value="F:protein homodimerization activity"/>
    <property type="evidence" value="ECO:0000314"/>
    <property type="project" value="UniProtKB"/>
</dbReference>
<dbReference type="GO" id="GO:0019789">
    <property type="term" value="F:SUMO transferase activity"/>
    <property type="evidence" value="ECO:0000304"/>
    <property type="project" value="TAIR"/>
</dbReference>
<dbReference type="GO" id="GO:0008270">
    <property type="term" value="F:zinc ion binding"/>
    <property type="evidence" value="ECO:0007669"/>
    <property type="project" value="UniProtKB-KW"/>
</dbReference>
<dbReference type="GO" id="GO:0051176">
    <property type="term" value="P:positive regulation of sulfur metabolic process"/>
    <property type="evidence" value="ECO:0000316"/>
    <property type="project" value="TAIR"/>
</dbReference>
<dbReference type="GO" id="GO:0016925">
    <property type="term" value="P:protein sumoylation"/>
    <property type="evidence" value="ECO:0000314"/>
    <property type="project" value="TAIR"/>
</dbReference>
<dbReference type="GO" id="GO:0060966">
    <property type="term" value="P:regulation of gene silencing by regulatory ncRNA"/>
    <property type="evidence" value="ECO:0000315"/>
    <property type="project" value="UniProtKB"/>
</dbReference>
<dbReference type="GO" id="GO:0009737">
    <property type="term" value="P:response to abscisic acid"/>
    <property type="evidence" value="ECO:0000315"/>
    <property type="project" value="UniProtKB"/>
</dbReference>
<dbReference type="GO" id="GO:0006970">
    <property type="term" value="P:response to osmotic stress"/>
    <property type="evidence" value="ECO:0000315"/>
    <property type="project" value="UniProtKB"/>
</dbReference>
<dbReference type="GO" id="GO:0009651">
    <property type="term" value="P:response to salt stress"/>
    <property type="evidence" value="ECO:0000315"/>
    <property type="project" value="UniProtKB"/>
</dbReference>
<dbReference type="CDD" id="cd16650">
    <property type="entry name" value="SP-RING_PIAS-like"/>
    <property type="match status" value="1"/>
</dbReference>
<dbReference type="FunFam" id="3.30.40.10:FF:001069">
    <property type="entry name" value="E4 SUMO-protein ligase PIAL1"/>
    <property type="match status" value="1"/>
</dbReference>
<dbReference type="Gene3D" id="3.30.40.10">
    <property type="entry name" value="Zinc/RING finger domain, C3HC4 (zinc finger)"/>
    <property type="match status" value="1"/>
</dbReference>
<dbReference type="InterPro" id="IPR004181">
    <property type="entry name" value="Znf_MIZ"/>
</dbReference>
<dbReference type="InterPro" id="IPR013083">
    <property type="entry name" value="Znf_RING/FYVE/PHD"/>
</dbReference>
<dbReference type="PANTHER" id="PTHR10782:SF4">
    <property type="entry name" value="TONALLI, ISOFORM E"/>
    <property type="match status" value="1"/>
</dbReference>
<dbReference type="PANTHER" id="PTHR10782">
    <property type="entry name" value="ZINC FINGER MIZ DOMAIN-CONTAINING PROTEIN"/>
    <property type="match status" value="1"/>
</dbReference>
<dbReference type="Pfam" id="PF02891">
    <property type="entry name" value="zf-MIZ"/>
    <property type="match status" value="1"/>
</dbReference>
<dbReference type="PROSITE" id="PS51044">
    <property type="entry name" value="ZF_SP_RING"/>
    <property type="match status" value="1"/>
</dbReference>
<comment type="function">
    <text evidence="3 4">Together with MOM1 and PIAL1, regulates transcriptional gene silencing (TGS) independently of changes in DNA methylation (PubMed:27113777). E4-type SUMO ligase that promotes SUMO chain formation in a SCE1-dependent manner and thus contributes to a pathway for proteolytic removal of sumoylation substrates (PubMed:25415977). Involved in stress responses and sulfur metabolism (PubMed:25415977).</text>
</comment>
<comment type="pathway">
    <text evidence="3">Protein modification; protein sumoylation.</text>
</comment>
<comment type="subunit">
    <text evidence="4">Homodimer (PubMed:27113777). Interacts with MOM1 and PIAL1 to form a high molecular mass complex which mediates transcriptional silencing at heterochromatin regions (PubMed:27113777).</text>
</comment>
<comment type="subcellular location">
    <subcellularLocation>
        <location evidence="6">Nucleus</location>
    </subcellularLocation>
</comment>
<comment type="tissue specificity">
    <text evidence="3">Expressed in leaves, stems and flowers, and, at low levels, in siliques and old leaves.</text>
</comment>
<comment type="disruption phenotype">
    <text evidence="3 4">No obvious growth difference under standard greenhouse conditions (PubMed:25415977). Altered sulfur metabolism (PubMed:25415977). Reduced growth in high osmotic pressure (mannitol) and in response to abscisic acid (ABA), but enhanced growth and fitness in high salt (NaCl) condition (PubMed:25415977). Abnormal steady state levels of SUMO conjugates in various conditions (PubMed:25415977). Lost ability to form a high molecular mass complex with PIAL1 and MOM1 (PubMed:27113777). Released transcriptional silencing of target genes (e.g. LTR, SDC, ROMANIAT5, At5te35950, pFWA-LUC and pRD29A-LUC) but unchanged DNA methylation levels; the expression level of these genes is higher in plants lacking both PIAL1 and PIAL2 (PubMed:27113777).</text>
</comment>
<comment type="similarity">
    <text evidence="6">Belongs to the PIAL protein ligase family.</text>
</comment>
<comment type="sequence caution" evidence="6">
    <conflict type="erroneous gene model prediction">
        <sequence resource="EMBL-CDS" id="BAB11464"/>
    </conflict>
</comment>
<name>PIAL2_ARATH</name>
<sequence>MSTAAAARPVAGTGLREKTAASLVNSFRLASVTQRLRYHIQDGAKVDPKEFQICCISFAKGIDFAIANNDIPKKVEEFPWLLKQLCRHGTDVYTKTALMVLMISVKHACHLGWFSDSESQELIALADEIRTCFGSSGSTSPGIKSPGSTFSQIMERFYPFVKLGHVLVSFEVKAGYTMLAHDFYISKNMPHSLQEKIRLFVAQTDNIDTSACISNPPEVSFLLNGKGVEKRVNIAMDTGPQLPTNVTAQLKYGTNLLQVMGNFKGNYIIIIAFTGLVVPPEKPVLKDYLQSGVIEASPDSDIIEGPSRVSLSCPISRKRIKLPVKGQLCKHLQCFDFSNYVHINMRNPTWRCPHCNQPVCYPDIRLDQNMAKILKDVEHNAADVIIDAGGTWKVTKNTGETPEPVREIIHDLEDPMSLLNSGPVVFDLTGDDDAELEVFGDNKVEDRKPCMSDAQGQSNNNNTNKHPSNDDYSSIFDISDVIALDPEILSALGNTAPQPHQASNTGTGQQYSNLSQIPMSIDPMPVPVPFSQTPSPRDRPATTSTVFTIPNPSPQYSQVHASPVTPTGTYLGRTTSPRWNQTYQSQAPPMTTPYTSRKVSVPVTSQSPANVSSFVQSQHVPRVLSQPNNYGVRGLTSSHASTSRQHPSGPTVQSVSRLSDLVDVDLTVPDTSNWRPRMRGSLVPGSHSTALDHMIIRPSQQSQTSTRLNSSQPVQTPSVQTSQAQSPFTTAAYRTETVLGNRNHPVPAPPGIVRPTGPTS</sequence>
<proteinExistence type="evidence at protein level"/>
<feature type="chain" id="PRO_0000434952" description="E4 SUMO-protein ligase PIAL2">
    <location>
        <begin position="1"/>
        <end position="760"/>
    </location>
</feature>
<feature type="zinc finger region" description="SP-RING-type" evidence="1">
    <location>
        <begin position="298"/>
        <end position="379"/>
    </location>
</feature>
<feature type="region of interest" description="Interacting domain (IND), required for interaction with MOM1 and PIAL1" evidence="4">
    <location>
        <begin position="143"/>
        <end position="301"/>
    </location>
</feature>
<feature type="region of interest" description="Disordered" evidence="2">
    <location>
        <begin position="440"/>
        <end position="471"/>
    </location>
</feature>
<feature type="region of interest" description="Disordered" evidence="2">
    <location>
        <begin position="492"/>
        <end position="522"/>
    </location>
</feature>
<feature type="region of interest" description="Disordered" evidence="2">
    <location>
        <begin position="631"/>
        <end position="657"/>
    </location>
</feature>
<feature type="region of interest" description="Disordered" evidence="2">
    <location>
        <begin position="699"/>
        <end position="760"/>
    </location>
</feature>
<feature type="compositionally biased region" description="Basic and acidic residues" evidence="2">
    <location>
        <begin position="440"/>
        <end position="450"/>
    </location>
</feature>
<feature type="compositionally biased region" description="Polar residues" evidence="2">
    <location>
        <begin position="492"/>
        <end position="518"/>
    </location>
</feature>
<feature type="compositionally biased region" description="Polar residues" evidence="2">
    <location>
        <begin position="631"/>
        <end position="653"/>
    </location>
</feature>
<feature type="compositionally biased region" description="Polar residues" evidence="2">
    <location>
        <begin position="699"/>
        <end position="729"/>
    </location>
</feature>
<feature type="binding site" evidence="1">
    <location>
        <position position="329"/>
    </location>
    <ligand>
        <name>Zn(2+)</name>
        <dbReference type="ChEBI" id="CHEBI:29105"/>
    </ligand>
</feature>
<feature type="binding site" evidence="1">
    <location>
        <position position="331"/>
    </location>
    <ligand>
        <name>Zn(2+)</name>
        <dbReference type="ChEBI" id="CHEBI:29105"/>
    </ligand>
</feature>
<feature type="binding site" evidence="1">
    <location>
        <position position="352"/>
    </location>
    <ligand>
        <name>Zn(2+)</name>
        <dbReference type="ChEBI" id="CHEBI:29105"/>
    </ligand>
</feature>
<feature type="binding site" evidence="1">
    <location>
        <position position="355"/>
    </location>
    <ligand>
        <name>Zn(2+)</name>
        <dbReference type="ChEBI" id="CHEBI:29105"/>
    </ligand>
</feature>
<feature type="mutagenesis site" description="Abolished SUMO ligase activity but normal ability to regulate transcriptional gene silencing (TGS); when associated with A-331. Slight reduction of SUMO ligase activity; when associated with A-355. Complete loss of activity; when associated with A-355 and 425-A--A-428." evidence="3 4">
    <original>C</original>
    <variation>A</variation>
    <location>
        <position position="329"/>
    </location>
</feature>
<feature type="mutagenesis site" description="Abolished SUMO ligase activity but normal ability to regulate transcriptional gene silencing (TGS); when associated with A-329." evidence="4">
    <original>H</original>
    <variation>A</variation>
    <location>
        <position position="331"/>
    </location>
</feature>
<feature type="mutagenesis site" description="Slight reduction of SUMO ligase activity; when associated with A-329. Complete loss of activity; when associated with A-329 and 425-A--A-428." evidence="3">
    <original>C</original>
    <variation>A</variation>
    <location>
        <position position="355"/>
    </location>
</feature>
<feature type="mutagenesis site" description="Slight reduction of SUMO ligase activity but normal ability to regulate transcriptional gene silencing (TGS). Complete loss of activity; when associated with A-329 and A-355." evidence="3 4">
    <original>VFDL</original>
    <variation>AAAA</variation>
    <location>
        <begin position="425"/>
        <end position="428"/>
    </location>
</feature>
<feature type="mutagenesis site" description="Slight reduction of SUMO ligase activity." evidence="3">
    <original>IFDI</original>
    <variation>AAAA</variation>
    <location>
        <begin position="475"/>
        <end position="478"/>
    </location>
</feature>
<feature type="sequence conflict" description="In Ref. 3; BAF01103." evidence="6" ref="3">
    <original>D</original>
    <variation>G</variation>
    <location>
        <position position="441"/>
    </location>
</feature>
<feature type="sequence conflict" description="In Ref. 3; BAF01103." evidence="6" ref="3">
    <original>S</original>
    <variation>P</variation>
    <location>
        <position position="515"/>
    </location>
</feature>
<reference key="1">
    <citation type="journal article" date="1997" name="DNA Res.">
        <title>Structural analysis of Arabidopsis thaliana chromosome 5. I. Sequence features of the 1.6 Mb regions covered by twenty physically assigned P1 clones.</title>
        <authorList>
            <person name="Sato S."/>
            <person name="Kotani H."/>
            <person name="Nakamura Y."/>
            <person name="Kaneko T."/>
            <person name="Asamizu E."/>
            <person name="Fukami M."/>
            <person name="Miyajima N."/>
            <person name="Tabata S."/>
        </authorList>
    </citation>
    <scope>NUCLEOTIDE SEQUENCE [LARGE SCALE GENOMIC DNA]</scope>
    <source>
        <strain>cv. Columbia</strain>
    </source>
</reference>
<reference key="2">
    <citation type="journal article" date="2017" name="Plant J.">
        <title>Araport11: a complete reannotation of the Arabidopsis thaliana reference genome.</title>
        <authorList>
            <person name="Cheng C.Y."/>
            <person name="Krishnakumar V."/>
            <person name="Chan A.P."/>
            <person name="Thibaud-Nissen F."/>
            <person name="Schobel S."/>
            <person name="Town C.D."/>
        </authorList>
    </citation>
    <scope>GENOME REANNOTATION</scope>
    <source>
        <strain>cv. Columbia</strain>
    </source>
</reference>
<reference key="3">
    <citation type="submission" date="2006-07" db="EMBL/GenBank/DDBJ databases">
        <title>Large-scale analysis of RIKEN Arabidopsis full-length (RAFL) cDNAs.</title>
        <authorList>
            <person name="Totoki Y."/>
            <person name="Seki M."/>
            <person name="Ishida J."/>
            <person name="Nakajima M."/>
            <person name="Enju A."/>
            <person name="Kamiya A."/>
            <person name="Narusaka M."/>
            <person name="Shin-i T."/>
            <person name="Nakagawa M."/>
            <person name="Sakamoto N."/>
            <person name="Oishi K."/>
            <person name="Kohara Y."/>
            <person name="Kobayashi M."/>
            <person name="Toyoda A."/>
            <person name="Sakaki Y."/>
            <person name="Sakurai T."/>
            <person name="Iida K."/>
            <person name="Akiyama K."/>
            <person name="Satou M."/>
            <person name="Toyoda T."/>
            <person name="Konagaya A."/>
            <person name="Carninci P."/>
            <person name="Kawai J."/>
            <person name="Hayashizaki Y."/>
            <person name="Shinozaki K."/>
        </authorList>
    </citation>
    <scope>NUCLEOTIDE SEQUENCE [LARGE SCALE MRNA]</scope>
    <source>
        <strain>cv. Columbia</strain>
    </source>
</reference>
<reference key="4">
    <citation type="journal article" date="2014" name="Plant Cell">
        <title>Arabidopsis PIAL1 and 2 promote SUMO chain formation as E4-type SUMO ligases and are involved in stress responses and sulfur metabolism.</title>
        <authorList>
            <person name="Tomanov K."/>
            <person name="Zeschmann A."/>
            <person name="Hermkes R."/>
            <person name="Eifler K."/>
            <person name="Ziba I."/>
            <person name="Grieco M."/>
            <person name="Novatchkova M."/>
            <person name="Hofmann K."/>
            <person name="Hesse H."/>
            <person name="Bachmair A."/>
        </authorList>
    </citation>
    <scope>FUNCTION</scope>
    <scope>DISRUPTION PHENOTYPE</scope>
    <scope>MUTAGENESIS OF CYS-329; CYS-355; 425-VAL--LEU-428 AND 475-ILE--ILE-478</scope>
    <scope>TISSUE SPECIFICITY</scope>
    <source>
        <strain>cv. Columbia</strain>
    </source>
</reference>
<reference key="5">
    <citation type="journal article" date="2016" name="Plant Cell">
        <title>The SUMO E3 ligase-like proteins PIAL1 and PIAL2 interact with MOM1 and form a novel complex required for transcriptional silencing.</title>
        <authorList>
            <person name="Han Y.-F."/>
            <person name="Zhao Q.-Y."/>
            <person name="Dang L.-L."/>
            <person name="Luo Y.-X."/>
            <person name="Chen S.-S."/>
            <person name="Shao C.-R."/>
            <person name="Huang H.-W."/>
            <person name="Li Y.-Q."/>
            <person name="Li L."/>
            <person name="Cai T."/>
            <person name="Chen S."/>
            <person name="He X.-J."/>
        </authorList>
    </citation>
    <scope>FUNCTION</scope>
    <scope>DISRUPTION PHENOTYPE</scope>
    <scope>MUTAGENESIS OF CYS-329; HIS-331 AND 425-VAL--LEU-428</scope>
    <scope>INTERACTION WITH MOM1 AND PIAL1</scope>
    <scope>SUBUNIT</scope>
    <source>
        <strain>cv. Columbia</strain>
    </source>
</reference>
<organism>
    <name type="scientific">Arabidopsis thaliana</name>
    <name type="common">Mouse-ear cress</name>
    <dbReference type="NCBI Taxonomy" id="3702"/>
    <lineage>
        <taxon>Eukaryota</taxon>
        <taxon>Viridiplantae</taxon>
        <taxon>Streptophyta</taxon>
        <taxon>Embryophyta</taxon>
        <taxon>Tracheophyta</taxon>
        <taxon>Spermatophyta</taxon>
        <taxon>Magnoliopsida</taxon>
        <taxon>eudicotyledons</taxon>
        <taxon>Gunneridae</taxon>
        <taxon>Pentapetalae</taxon>
        <taxon>rosids</taxon>
        <taxon>malvids</taxon>
        <taxon>Brassicales</taxon>
        <taxon>Brassicaceae</taxon>
        <taxon>Camelineae</taxon>
        <taxon>Arabidopsis</taxon>
    </lineage>
</organism>
<keyword id="KW-0436">Ligase</keyword>
<keyword id="KW-0479">Metal-binding</keyword>
<keyword id="KW-0539">Nucleus</keyword>
<keyword id="KW-1185">Reference proteome</keyword>
<keyword id="KW-0808">Transferase</keyword>
<keyword id="KW-0833">Ubl conjugation pathway</keyword>
<keyword id="KW-0862">Zinc</keyword>
<keyword id="KW-0863">Zinc-finger</keyword>